<proteinExistence type="evidence at transcript level"/>
<comment type="function">
    <text evidence="1">Receptor for transcobalamin saturated with cobalamin (TCbl). Plays an important role in cobalamin uptake. Plasma membrane protein that is expressed on follicular dendritic cells (FDC) and mediates interaction with germinal center B cells. Functions as a costimulator to promote B cell responses to antigenic stimuli; promotes B cell differentiation and proliferation. Germinal center-B (GC-B) cells differentiate into memory B-cells and plasma cells (PC) through interaction with T-cells and follicular dendritic cells (FDC). CD320 augments the proliferation of PC precursors generated by IL-10.</text>
</comment>
<comment type="subunit">
    <text evidence="1">Interacts (via LDL-receptor class A domains) with TCN2.</text>
</comment>
<comment type="subcellular location">
    <subcellularLocation>
        <location evidence="1">Cell membrane</location>
        <topology evidence="1">Single-pass type I membrane protein</topology>
    </subcellularLocation>
</comment>
<dbReference type="EMBL" id="BC088861">
    <property type="protein sequence ID" value="AAH88861.1"/>
    <property type="molecule type" value="mRNA"/>
</dbReference>
<dbReference type="RefSeq" id="NP_001014223.1">
    <property type="nucleotide sequence ID" value="NM_001014201.2"/>
</dbReference>
<dbReference type="FunCoup" id="Q5HZW5">
    <property type="interactions" value="1020"/>
</dbReference>
<dbReference type="STRING" id="10116.ENSRNOP00000009067"/>
<dbReference type="GlyCosmos" id="Q5HZW5">
    <property type="glycosylation" value="2 sites, No reported glycans"/>
</dbReference>
<dbReference type="GlyGen" id="Q5HZW5">
    <property type="glycosylation" value="3 sites"/>
</dbReference>
<dbReference type="PhosphoSitePlus" id="Q5HZW5"/>
<dbReference type="PaxDb" id="10116-ENSRNOP00000009067"/>
<dbReference type="Ensembl" id="ENSRNOT00000009067.7">
    <property type="protein sequence ID" value="ENSRNOP00000009067.4"/>
    <property type="gene ID" value="ENSRNOG00000006901.7"/>
</dbReference>
<dbReference type="GeneID" id="362851"/>
<dbReference type="KEGG" id="rno:362851"/>
<dbReference type="UCSC" id="RGD:1305860">
    <property type="organism name" value="rat"/>
</dbReference>
<dbReference type="AGR" id="RGD:1305860"/>
<dbReference type="CTD" id="51293"/>
<dbReference type="RGD" id="1305860">
    <property type="gene designation" value="Cd320"/>
</dbReference>
<dbReference type="eggNOG" id="KOG1215">
    <property type="taxonomic scope" value="Eukaryota"/>
</dbReference>
<dbReference type="GeneTree" id="ENSGT00730000111436"/>
<dbReference type="HOGENOM" id="CLU_094249_0_0_1"/>
<dbReference type="InParanoid" id="Q5HZW5"/>
<dbReference type="OrthoDB" id="9990982at2759"/>
<dbReference type="PhylomeDB" id="Q5HZW5"/>
<dbReference type="TreeFam" id="TF337215"/>
<dbReference type="Reactome" id="R-RNO-9758890">
    <property type="pathway name" value="Transport of RCbl within the body"/>
</dbReference>
<dbReference type="PRO" id="PR:Q5HZW5"/>
<dbReference type="Proteomes" id="UP000002494">
    <property type="component" value="Chromosome 7"/>
</dbReference>
<dbReference type="Bgee" id="ENSRNOG00000006901">
    <property type="expression patterns" value="Expressed in pancreas and 20 other cell types or tissues"/>
</dbReference>
<dbReference type="GO" id="GO:0005886">
    <property type="term" value="C:plasma membrane"/>
    <property type="evidence" value="ECO:0000250"/>
    <property type="project" value="UniProtKB"/>
</dbReference>
<dbReference type="GO" id="GO:0005509">
    <property type="term" value="F:calcium ion binding"/>
    <property type="evidence" value="ECO:0000250"/>
    <property type="project" value="UniProtKB"/>
</dbReference>
<dbReference type="GO" id="GO:0038024">
    <property type="term" value="F:cargo receptor activity"/>
    <property type="evidence" value="ECO:0000266"/>
    <property type="project" value="RGD"/>
</dbReference>
<dbReference type="GO" id="GO:0031419">
    <property type="term" value="F:cobalamin binding"/>
    <property type="evidence" value="ECO:0000266"/>
    <property type="project" value="RGD"/>
</dbReference>
<dbReference type="GO" id="GO:0008083">
    <property type="term" value="F:growth factor activity"/>
    <property type="evidence" value="ECO:0007669"/>
    <property type="project" value="UniProtKB-KW"/>
</dbReference>
<dbReference type="GO" id="GO:0031296">
    <property type="term" value="P:B cell costimulation"/>
    <property type="evidence" value="ECO:0000250"/>
    <property type="project" value="UniProtKB"/>
</dbReference>
<dbReference type="GO" id="GO:0015889">
    <property type="term" value="P:cobalamin transport"/>
    <property type="evidence" value="ECO:0000250"/>
    <property type="project" value="UniProtKB"/>
</dbReference>
<dbReference type="GO" id="GO:0030890">
    <property type="term" value="P:positive regulation of B cell proliferation"/>
    <property type="evidence" value="ECO:0000250"/>
    <property type="project" value="UniProtKB"/>
</dbReference>
<dbReference type="GO" id="GO:0030656">
    <property type="term" value="P:regulation of vitamin metabolic process"/>
    <property type="evidence" value="ECO:0000266"/>
    <property type="project" value="RGD"/>
</dbReference>
<dbReference type="CDD" id="cd00112">
    <property type="entry name" value="LDLa"/>
    <property type="match status" value="2"/>
</dbReference>
<dbReference type="FunFam" id="4.10.400.10:FF:000002">
    <property type="entry name" value="Low-density lipoprotein receptor-related protein 1"/>
    <property type="match status" value="2"/>
</dbReference>
<dbReference type="Gene3D" id="4.10.400.10">
    <property type="entry name" value="Low-density Lipoprotein Receptor"/>
    <property type="match status" value="2"/>
</dbReference>
<dbReference type="InterPro" id="IPR036055">
    <property type="entry name" value="LDL_receptor-like_sf"/>
</dbReference>
<dbReference type="InterPro" id="IPR050685">
    <property type="entry name" value="LDLR"/>
</dbReference>
<dbReference type="InterPro" id="IPR023415">
    <property type="entry name" value="LDLR_class-A_CS"/>
</dbReference>
<dbReference type="InterPro" id="IPR002172">
    <property type="entry name" value="LDrepeatLR_classA_rpt"/>
</dbReference>
<dbReference type="PANTHER" id="PTHR24270:SF27">
    <property type="entry name" value="CD320 ANTIGEN"/>
    <property type="match status" value="1"/>
</dbReference>
<dbReference type="PANTHER" id="PTHR24270">
    <property type="entry name" value="LOW-DENSITY LIPOPROTEIN RECEPTOR-RELATED"/>
    <property type="match status" value="1"/>
</dbReference>
<dbReference type="Pfam" id="PF00057">
    <property type="entry name" value="Ldl_recept_a"/>
    <property type="match status" value="2"/>
</dbReference>
<dbReference type="PRINTS" id="PR00261">
    <property type="entry name" value="LDLRECEPTOR"/>
</dbReference>
<dbReference type="SMART" id="SM00192">
    <property type="entry name" value="LDLa"/>
    <property type="match status" value="2"/>
</dbReference>
<dbReference type="SUPFAM" id="SSF57424">
    <property type="entry name" value="LDL receptor-like module"/>
    <property type="match status" value="2"/>
</dbReference>
<dbReference type="PROSITE" id="PS01209">
    <property type="entry name" value="LDLRA_1"/>
    <property type="match status" value="2"/>
</dbReference>
<dbReference type="PROSITE" id="PS50068">
    <property type="entry name" value="LDLRA_2"/>
    <property type="match status" value="2"/>
</dbReference>
<keyword id="KW-1003">Cell membrane</keyword>
<keyword id="KW-1015">Disulfide bond</keyword>
<keyword id="KW-0325">Glycoprotein</keyword>
<keyword id="KW-0339">Growth factor</keyword>
<keyword id="KW-0472">Membrane</keyword>
<keyword id="KW-0479">Metal-binding</keyword>
<keyword id="KW-1185">Reference proteome</keyword>
<keyword id="KW-0677">Repeat</keyword>
<keyword id="KW-0732">Signal</keyword>
<keyword id="KW-0812">Transmembrane</keyword>
<keyword id="KW-1133">Transmembrane helix</keyword>
<reference key="1">
    <citation type="journal article" date="2004" name="Genome Res.">
        <title>The status, quality, and expansion of the NIH full-length cDNA project: the Mammalian Gene Collection (MGC).</title>
        <authorList>
            <consortium name="The MGC Project Team"/>
        </authorList>
    </citation>
    <scope>NUCLEOTIDE SEQUENCE [LARGE SCALE MRNA]</scope>
    <source>
        <tissue>Ovary</tissue>
    </source>
</reference>
<gene>
    <name type="primary">Cd320</name>
</gene>
<sequence>MARCGAGRAAALGLVLRLLLGLRTGPEAAPAPTSAPAHTLVQVSGPRAGSCPTDTFKCLTSGYCVPLSWRCDGDRDCSDGSDEEECRIEPCAQNRQCQPQPALPCSCDNISGCSAGSDKNLNCSRSPCQEGELRCILDDVCIPHTWRCDGHPDCPDSSDELSCDTDTETDKIFQEENATTSMSSMIVEKETSFRNVTVASAGHPSRNPNAYGVIAAAGVLSAILVSATILILLRLRGQGYLPPTGLLVAVKESLLLSERKTSLI</sequence>
<accession>Q5HZW5</accession>
<protein>
    <recommendedName>
        <fullName>CD320 antigen</fullName>
    </recommendedName>
    <alternativeName>
        <fullName>Transcobalamin receptor</fullName>
        <shortName>TCblR</shortName>
    </alternativeName>
    <cdAntigenName>CD320</cdAntigenName>
</protein>
<name>CD320_RAT</name>
<evidence type="ECO:0000250" key="1">
    <source>
        <dbReference type="UniProtKB" id="Q9NPF0"/>
    </source>
</evidence>
<evidence type="ECO:0000255" key="2"/>
<evidence type="ECO:0000255" key="3">
    <source>
        <dbReference type="PROSITE-ProRule" id="PRU00124"/>
    </source>
</evidence>
<feature type="signal peptide" evidence="2">
    <location>
        <begin position="1"/>
        <end position="28"/>
    </location>
</feature>
<feature type="chain" id="PRO_0000354053" description="CD320 antigen">
    <location>
        <begin position="29"/>
        <end position="264"/>
    </location>
</feature>
<feature type="transmembrane region" description="Helical" evidence="2">
    <location>
        <begin position="213"/>
        <end position="233"/>
    </location>
</feature>
<feature type="domain" description="LDL-receptor class A 1" evidence="3">
    <location>
        <begin position="50"/>
        <end position="87"/>
    </location>
</feature>
<feature type="domain" description="LDL-receptor class A 2" evidence="3">
    <location>
        <begin position="127"/>
        <end position="164"/>
    </location>
</feature>
<feature type="binding site" evidence="1">
    <location>
        <position position="69"/>
    </location>
    <ligand>
        <name>Ca(2+)</name>
        <dbReference type="ChEBI" id="CHEBI:29108"/>
        <label>1</label>
    </ligand>
</feature>
<feature type="binding site" evidence="1">
    <location>
        <position position="72"/>
    </location>
    <ligand>
        <name>Ca(2+)</name>
        <dbReference type="ChEBI" id="CHEBI:29108"/>
        <label>1</label>
    </ligand>
</feature>
<feature type="binding site" evidence="1">
    <location>
        <position position="74"/>
    </location>
    <ligand>
        <name>Ca(2+)</name>
        <dbReference type="ChEBI" id="CHEBI:29108"/>
        <label>1</label>
    </ligand>
</feature>
<feature type="binding site" evidence="1">
    <location>
        <position position="76"/>
    </location>
    <ligand>
        <name>Ca(2+)</name>
        <dbReference type="ChEBI" id="CHEBI:29108"/>
        <label>1</label>
    </ligand>
</feature>
<feature type="binding site" evidence="1">
    <location>
        <position position="82"/>
    </location>
    <ligand>
        <name>Ca(2+)</name>
        <dbReference type="ChEBI" id="CHEBI:29108"/>
        <label>1</label>
    </ligand>
</feature>
<feature type="binding site" evidence="1">
    <location>
        <position position="83"/>
    </location>
    <ligand>
        <name>Ca(2+)</name>
        <dbReference type="ChEBI" id="CHEBI:29108"/>
        <label>1</label>
    </ligand>
</feature>
<feature type="binding site" evidence="1">
    <location>
        <position position="146"/>
    </location>
    <ligand>
        <name>Ca(2+)</name>
        <dbReference type="ChEBI" id="CHEBI:29108"/>
        <label>2</label>
    </ligand>
</feature>
<feature type="binding site" evidence="1">
    <location>
        <position position="149"/>
    </location>
    <ligand>
        <name>Ca(2+)</name>
        <dbReference type="ChEBI" id="CHEBI:29108"/>
        <label>2</label>
    </ligand>
</feature>
<feature type="binding site" evidence="1">
    <location>
        <position position="151"/>
    </location>
    <ligand>
        <name>Ca(2+)</name>
        <dbReference type="ChEBI" id="CHEBI:29108"/>
        <label>2</label>
    </ligand>
</feature>
<feature type="binding site" evidence="1">
    <location>
        <position position="153"/>
    </location>
    <ligand>
        <name>Ca(2+)</name>
        <dbReference type="ChEBI" id="CHEBI:29108"/>
        <label>2</label>
    </ligand>
</feature>
<feature type="binding site" evidence="1">
    <location>
        <position position="159"/>
    </location>
    <ligand>
        <name>Ca(2+)</name>
        <dbReference type="ChEBI" id="CHEBI:29108"/>
        <label>2</label>
    </ligand>
</feature>
<feature type="binding site" evidence="1">
    <location>
        <position position="160"/>
    </location>
    <ligand>
        <name>Ca(2+)</name>
        <dbReference type="ChEBI" id="CHEBI:29108"/>
        <label>2</label>
    </ligand>
</feature>
<feature type="glycosylation site" description="N-linked (GlcNAc...) asparagine" evidence="2">
    <location>
        <position position="122"/>
    </location>
</feature>
<feature type="glycosylation site" description="N-linked (GlcNAc...) asparagine" evidence="2">
    <location>
        <position position="195"/>
    </location>
</feature>
<feature type="disulfide bond" evidence="3">
    <location>
        <begin position="51"/>
        <end position="64"/>
    </location>
</feature>
<feature type="disulfide bond" evidence="3">
    <location>
        <begin position="58"/>
        <end position="77"/>
    </location>
</feature>
<feature type="disulfide bond" evidence="3">
    <location>
        <begin position="71"/>
        <end position="86"/>
    </location>
</feature>
<feature type="disulfide bond" evidence="3">
    <location>
        <begin position="128"/>
        <end position="141"/>
    </location>
</feature>
<feature type="disulfide bond" evidence="3">
    <location>
        <begin position="135"/>
        <end position="154"/>
    </location>
</feature>
<feature type="disulfide bond" evidence="3">
    <location>
        <begin position="148"/>
        <end position="163"/>
    </location>
</feature>
<organism>
    <name type="scientific">Rattus norvegicus</name>
    <name type="common">Rat</name>
    <dbReference type="NCBI Taxonomy" id="10116"/>
    <lineage>
        <taxon>Eukaryota</taxon>
        <taxon>Metazoa</taxon>
        <taxon>Chordata</taxon>
        <taxon>Craniata</taxon>
        <taxon>Vertebrata</taxon>
        <taxon>Euteleostomi</taxon>
        <taxon>Mammalia</taxon>
        <taxon>Eutheria</taxon>
        <taxon>Euarchontoglires</taxon>
        <taxon>Glires</taxon>
        <taxon>Rodentia</taxon>
        <taxon>Myomorpha</taxon>
        <taxon>Muroidea</taxon>
        <taxon>Muridae</taxon>
        <taxon>Murinae</taxon>
        <taxon>Rattus</taxon>
    </lineage>
</organism>